<protein>
    <recommendedName>
        <fullName evidence="1">Ribonuclease P protein component 4</fullName>
        <shortName evidence="1">RNase P component 4</shortName>
        <ecNumber evidence="1">3.1.26.5</ecNumber>
    </recommendedName>
    <alternativeName>
        <fullName evidence="1">Rpp21</fullName>
    </alternativeName>
</protein>
<evidence type="ECO:0000255" key="1">
    <source>
        <dbReference type="HAMAP-Rule" id="MF_00757"/>
    </source>
</evidence>
<feature type="chain" id="PRO_0000153862" description="Ribonuclease P protein component 4">
    <location>
        <begin position="1"/>
        <end position="118"/>
    </location>
</feature>
<feature type="binding site" evidence="1">
    <location>
        <position position="59"/>
    </location>
    <ligand>
        <name>Zn(2+)</name>
        <dbReference type="ChEBI" id="CHEBI:29105"/>
    </ligand>
</feature>
<feature type="binding site" evidence="1">
    <location>
        <position position="62"/>
    </location>
    <ligand>
        <name>Zn(2+)</name>
        <dbReference type="ChEBI" id="CHEBI:29105"/>
    </ligand>
</feature>
<feature type="binding site" evidence="1">
    <location>
        <position position="85"/>
    </location>
    <ligand>
        <name>Zn(2+)</name>
        <dbReference type="ChEBI" id="CHEBI:29105"/>
    </ligand>
</feature>
<feature type="binding site" evidence="1">
    <location>
        <position position="88"/>
    </location>
    <ligand>
        <name>Zn(2+)</name>
        <dbReference type="ChEBI" id="CHEBI:29105"/>
    </ligand>
</feature>
<accession>Q4JCL6</accession>
<comment type="function">
    <text evidence="1">Part of ribonuclease P, a protein complex that generates mature tRNA molecules by cleaving their 5'-ends.</text>
</comment>
<comment type="catalytic activity">
    <reaction evidence="1">
        <text>Endonucleolytic cleavage of RNA, removing 5'-extranucleotides from tRNA precursor.</text>
        <dbReference type="EC" id="3.1.26.5"/>
    </reaction>
</comment>
<comment type="cofactor">
    <cofactor evidence="1">
        <name>Zn(2+)</name>
        <dbReference type="ChEBI" id="CHEBI:29105"/>
    </cofactor>
    <text evidence="1">Binds 1 zinc ion per subunit.</text>
</comment>
<comment type="subunit">
    <text evidence="1">Consists of a catalytic RNA component and at least 4-5 protein subunits.</text>
</comment>
<comment type="subcellular location">
    <subcellularLocation>
        <location evidence="1">Cytoplasm</location>
    </subcellularLocation>
</comment>
<comment type="similarity">
    <text evidence="1">Belongs to the eukaryotic/archaeal RNase P protein component 4 family.</text>
</comment>
<reference key="1">
    <citation type="journal article" date="2005" name="J. Bacteriol.">
        <title>The genome of Sulfolobus acidocaldarius, a model organism of the Crenarchaeota.</title>
        <authorList>
            <person name="Chen L."/>
            <person name="Bruegger K."/>
            <person name="Skovgaard M."/>
            <person name="Redder P."/>
            <person name="She Q."/>
            <person name="Torarinsson E."/>
            <person name="Greve B."/>
            <person name="Awayez M."/>
            <person name="Zibat A."/>
            <person name="Klenk H.-P."/>
            <person name="Garrett R.A."/>
        </authorList>
    </citation>
    <scope>NUCLEOTIDE SEQUENCE [LARGE SCALE GENOMIC DNA]</scope>
    <source>
        <strain>ATCC 33909 / DSM 639 / JCM 8929 / NBRC 15157 / NCIMB 11770</strain>
    </source>
</reference>
<organism>
    <name type="scientific">Sulfolobus acidocaldarius (strain ATCC 33909 / DSM 639 / JCM 8929 / NBRC 15157 / NCIMB 11770)</name>
    <dbReference type="NCBI Taxonomy" id="330779"/>
    <lineage>
        <taxon>Archaea</taxon>
        <taxon>Thermoproteota</taxon>
        <taxon>Thermoprotei</taxon>
        <taxon>Sulfolobales</taxon>
        <taxon>Sulfolobaceae</taxon>
        <taxon>Sulfolobus</taxon>
    </lineage>
</organism>
<sequence>MKVKNVKPYKRRSLELIEMAIDMTKNREYQLAREYTKLAITYSRKFRFKIPIEYKRSICRKCYVPLVIGLTERRRIKNKVVIRTCLLCGWVRRYELKRDSKEGKGIPPRHKNRQERTQ</sequence>
<dbReference type="EC" id="3.1.26.5" evidence="1"/>
<dbReference type="EMBL" id="CP000077">
    <property type="protein sequence ID" value="AAY79463.1"/>
    <property type="molecule type" value="Genomic_DNA"/>
</dbReference>
<dbReference type="RefSeq" id="WP_011276964.1">
    <property type="nucleotide sequence ID" value="NC_007181.1"/>
</dbReference>
<dbReference type="SMR" id="Q4JCL6"/>
<dbReference type="STRING" id="330779.Saci_0033"/>
<dbReference type="GeneID" id="31536127"/>
<dbReference type="KEGG" id="sai:Saci_0033"/>
<dbReference type="PATRIC" id="fig|330779.12.peg.31"/>
<dbReference type="eggNOG" id="arCOG04345">
    <property type="taxonomic scope" value="Archaea"/>
</dbReference>
<dbReference type="HOGENOM" id="CLU_079140_3_1_2"/>
<dbReference type="Proteomes" id="UP000001018">
    <property type="component" value="Chromosome"/>
</dbReference>
<dbReference type="GO" id="GO:0005737">
    <property type="term" value="C:cytoplasm"/>
    <property type="evidence" value="ECO:0007669"/>
    <property type="project" value="UniProtKB-SubCell"/>
</dbReference>
<dbReference type="GO" id="GO:0030677">
    <property type="term" value="C:ribonuclease P complex"/>
    <property type="evidence" value="ECO:0007669"/>
    <property type="project" value="UniProtKB-UniRule"/>
</dbReference>
<dbReference type="GO" id="GO:0004526">
    <property type="term" value="F:ribonuclease P activity"/>
    <property type="evidence" value="ECO:0007669"/>
    <property type="project" value="UniProtKB-UniRule"/>
</dbReference>
<dbReference type="GO" id="GO:0008270">
    <property type="term" value="F:zinc ion binding"/>
    <property type="evidence" value="ECO:0007669"/>
    <property type="project" value="UniProtKB-UniRule"/>
</dbReference>
<dbReference type="GO" id="GO:0001682">
    <property type="term" value="P:tRNA 5'-leader removal"/>
    <property type="evidence" value="ECO:0007669"/>
    <property type="project" value="UniProtKB-UniRule"/>
</dbReference>
<dbReference type="Gene3D" id="6.20.50.20">
    <property type="match status" value="1"/>
</dbReference>
<dbReference type="HAMAP" id="MF_00757">
    <property type="entry name" value="RNase_P_4"/>
    <property type="match status" value="1"/>
</dbReference>
<dbReference type="InterPro" id="IPR016432">
    <property type="entry name" value="RNP4"/>
</dbReference>
<dbReference type="InterPro" id="IPR007175">
    <property type="entry name" value="Rpr2/Snm1/Rpp21"/>
</dbReference>
<dbReference type="PANTHER" id="PTHR14742:SF0">
    <property type="entry name" value="RIBONUCLEASE P PROTEIN SUBUNIT P21"/>
    <property type="match status" value="1"/>
</dbReference>
<dbReference type="PANTHER" id="PTHR14742">
    <property type="entry name" value="RIBONUCLEASE P SUBUNIT P21"/>
    <property type="match status" value="1"/>
</dbReference>
<dbReference type="Pfam" id="PF04032">
    <property type="entry name" value="Rpr2"/>
    <property type="match status" value="1"/>
</dbReference>
<dbReference type="PIRSF" id="PIRSF004878">
    <property type="entry name" value="RNase_P_4"/>
    <property type="match status" value="1"/>
</dbReference>
<name>RNP4_SULAC</name>
<keyword id="KW-0963">Cytoplasm</keyword>
<keyword id="KW-0255">Endonuclease</keyword>
<keyword id="KW-0378">Hydrolase</keyword>
<keyword id="KW-0479">Metal-binding</keyword>
<keyword id="KW-0540">Nuclease</keyword>
<keyword id="KW-1185">Reference proteome</keyword>
<keyword id="KW-0819">tRNA processing</keyword>
<keyword id="KW-0862">Zinc</keyword>
<gene>
    <name evidence="1" type="primary">rnp4</name>
    <name type="ordered locus">Saci_0033</name>
</gene>
<proteinExistence type="inferred from homology"/>